<sequence length="94" mass="10234">MLQSNEYFSGKVKSIGFSSSSTGRASVGVMVEGEYTFSTAEPEEMTVISGALNVLLPDATDWQVYEAGSVFNVPGHSEFHLQVAEPTSYLCRYL</sequence>
<gene>
    <name evidence="1" type="primary">ppnP</name>
    <name type="ordered locus">E2348C_0327</name>
</gene>
<feature type="chain" id="PRO_1000185193" description="Pyrimidine/purine nucleoside phosphorylase">
    <location>
        <begin position="1"/>
        <end position="94"/>
    </location>
</feature>
<organism>
    <name type="scientific">Escherichia coli O127:H6 (strain E2348/69 / EPEC)</name>
    <dbReference type="NCBI Taxonomy" id="574521"/>
    <lineage>
        <taxon>Bacteria</taxon>
        <taxon>Pseudomonadati</taxon>
        <taxon>Pseudomonadota</taxon>
        <taxon>Gammaproteobacteria</taxon>
        <taxon>Enterobacterales</taxon>
        <taxon>Enterobacteriaceae</taxon>
        <taxon>Escherichia</taxon>
    </lineage>
</organism>
<reference key="1">
    <citation type="journal article" date="2009" name="J. Bacteriol.">
        <title>Complete genome sequence and comparative genome analysis of enteropathogenic Escherichia coli O127:H6 strain E2348/69.</title>
        <authorList>
            <person name="Iguchi A."/>
            <person name="Thomson N.R."/>
            <person name="Ogura Y."/>
            <person name="Saunders D."/>
            <person name="Ooka T."/>
            <person name="Henderson I.R."/>
            <person name="Harris D."/>
            <person name="Asadulghani M."/>
            <person name="Kurokawa K."/>
            <person name="Dean P."/>
            <person name="Kenny B."/>
            <person name="Quail M.A."/>
            <person name="Thurston S."/>
            <person name="Dougan G."/>
            <person name="Hayashi T."/>
            <person name="Parkhill J."/>
            <person name="Frankel G."/>
        </authorList>
    </citation>
    <scope>NUCLEOTIDE SEQUENCE [LARGE SCALE GENOMIC DNA]</scope>
    <source>
        <strain>E2348/69 / EPEC</strain>
    </source>
</reference>
<keyword id="KW-0328">Glycosyltransferase</keyword>
<keyword id="KW-1185">Reference proteome</keyword>
<keyword id="KW-0808">Transferase</keyword>
<accession>B7UJL5</accession>
<proteinExistence type="inferred from homology"/>
<name>PPNP_ECO27</name>
<evidence type="ECO:0000255" key="1">
    <source>
        <dbReference type="HAMAP-Rule" id="MF_01537"/>
    </source>
</evidence>
<comment type="function">
    <text evidence="1">Catalyzes the phosphorolysis of diverse nucleosides, yielding D-ribose 1-phosphate and the respective free bases. Can use uridine, adenosine, guanosine, cytidine, thymidine, inosine and xanthosine as substrates. Also catalyzes the reverse reactions.</text>
</comment>
<comment type="catalytic activity">
    <reaction evidence="1">
        <text>a purine D-ribonucleoside + phosphate = a purine nucleobase + alpha-D-ribose 1-phosphate</text>
        <dbReference type="Rhea" id="RHEA:19805"/>
        <dbReference type="ChEBI" id="CHEBI:26386"/>
        <dbReference type="ChEBI" id="CHEBI:43474"/>
        <dbReference type="ChEBI" id="CHEBI:57720"/>
        <dbReference type="ChEBI" id="CHEBI:142355"/>
        <dbReference type="EC" id="2.4.2.1"/>
    </reaction>
</comment>
<comment type="catalytic activity">
    <reaction evidence="1">
        <text>adenosine + phosphate = alpha-D-ribose 1-phosphate + adenine</text>
        <dbReference type="Rhea" id="RHEA:27642"/>
        <dbReference type="ChEBI" id="CHEBI:16335"/>
        <dbReference type="ChEBI" id="CHEBI:16708"/>
        <dbReference type="ChEBI" id="CHEBI:43474"/>
        <dbReference type="ChEBI" id="CHEBI:57720"/>
        <dbReference type="EC" id="2.4.2.1"/>
    </reaction>
</comment>
<comment type="catalytic activity">
    <reaction evidence="1">
        <text>cytidine + phosphate = cytosine + alpha-D-ribose 1-phosphate</text>
        <dbReference type="Rhea" id="RHEA:52540"/>
        <dbReference type="ChEBI" id="CHEBI:16040"/>
        <dbReference type="ChEBI" id="CHEBI:17562"/>
        <dbReference type="ChEBI" id="CHEBI:43474"/>
        <dbReference type="ChEBI" id="CHEBI:57720"/>
        <dbReference type="EC" id="2.4.2.2"/>
    </reaction>
</comment>
<comment type="catalytic activity">
    <reaction evidence="1">
        <text>guanosine + phosphate = alpha-D-ribose 1-phosphate + guanine</text>
        <dbReference type="Rhea" id="RHEA:13233"/>
        <dbReference type="ChEBI" id="CHEBI:16235"/>
        <dbReference type="ChEBI" id="CHEBI:16750"/>
        <dbReference type="ChEBI" id="CHEBI:43474"/>
        <dbReference type="ChEBI" id="CHEBI:57720"/>
        <dbReference type="EC" id="2.4.2.1"/>
    </reaction>
</comment>
<comment type="catalytic activity">
    <reaction evidence="1">
        <text>inosine + phosphate = alpha-D-ribose 1-phosphate + hypoxanthine</text>
        <dbReference type="Rhea" id="RHEA:27646"/>
        <dbReference type="ChEBI" id="CHEBI:17368"/>
        <dbReference type="ChEBI" id="CHEBI:17596"/>
        <dbReference type="ChEBI" id="CHEBI:43474"/>
        <dbReference type="ChEBI" id="CHEBI:57720"/>
        <dbReference type="EC" id="2.4.2.1"/>
    </reaction>
</comment>
<comment type="catalytic activity">
    <reaction evidence="1">
        <text>thymidine + phosphate = 2-deoxy-alpha-D-ribose 1-phosphate + thymine</text>
        <dbReference type="Rhea" id="RHEA:16037"/>
        <dbReference type="ChEBI" id="CHEBI:17748"/>
        <dbReference type="ChEBI" id="CHEBI:17821"/>
        <dbReference type="ChEBI" id="CHEBI:43474"/>
        <dbReference type="ChEBI" id="CHEBI:57259"/>
        <dbReference type="EC" id="2.4.2.2"/>
    </reaction>
</comment>
<comment type="catalytic activity">
    <reaction evidence="1">
        <text>uridine + phosphate = alpha-D-ribose 1-phosphate + uracil</text>
        <dbReference type="Rhea" id="RHEA:24388"/>
        <dbReference type="ChEBI" id="CHEBI:16704"/>
        <dbReference type="ChEBI" id="CHEBI:17568"/>
        <dbReference type="ChEBI" id="CHEBI:43474"/>
        <dbReference type="ChEBI" id="CHEBI:57720"/>
        <dbReference type="EC" id="2.4.2.2"/>
    </reaction>
</comment>
<comment type="catalytic activity">
    <reaction evidence="1">
        <text>xanthosine + phosphate = alpha-D-ribose 1-phosphate + xanthine</text>
        <dbReference type="Rhea" id="RHEA:27638"/>
        <dbReference type="ChEBI" id="CHEBI:17712"/>
        <dbReference type="ChEBI" id="CHEBI:18107"/>
        <dbReference type="ChEBI" id="CHEBI:43474"/>
        <dbReference type="ChEBI" id="CHEBI:57720"/>
        <dbReference type="EC" id="2.4.2.1"/>
    </reaction>
</comment>
<comment type="similarity">
    <text evidence="1">Belongs to the nucleoside phosphorylase PpnP family.</text>
</comment>
<protein>
    <recommendedName>
        <fullName evidence="1">Pyrimidine/purine nucleoside phosphorylase</fullName>
        <ecNumber evidence="1">2.4.2.1</ecNumber>
        <ecNumber evidence="1">2.4.2.2</ecNumber>
    </recommendedName>
    <alternativeName>
        <fullName evidence="1">Adenosine phosphorylase</fullName>
    </alternativeName>
    <alternativeName>
        <fullName evidence="1">Cytidine phosphorylase</fullName>
    </alternativeName>
    <alternativeName>
        <fullName evidence="1">Guanosine phosphorylase</fullName>
    </alternativeName>
    <alternativeName>
        <fullName evidence="1">Inosine phosphorylase</fullName>
    </alternativeName>
    <alternativeName>
        <fullName evidence="1">Thymidine phosphorylase</fullName>
    </alternativeName>
    <alternativeName>
        <fullName evidence="1">Uridine phosphorylase</fullName>
    </alternativeName>
    <alternativeName>
        <fullName evidence="1">Xanthosine phosphorylase</fullName>
    </alternativeName>
</protein>
<dbReference type="EC" id="2.4.2.1" evidence="1"/>
<dbReference type="EC" id="2.4.2.2" evidence="1"/>
<dbReference type="EMBL" id="FM180568">
    <property type="protein sequence ID" value="CAS07875.1"/>
    <property type="molecule type" value="Genomic_DNA"/>
</dbReference>
<dbReference type="RefSeq" id="WP_000941942.1">
    <property type="nucleotide sequence ID" value="NC_011601.1"/>
</dbReference>
<dbReference type="SMR" id="B7UJL5"/>
<dbReference type="GeneID" id="93777070"/>
<dbReference type="KEGG" id="ecg:E2348C_0327"/>
<dbReference type="HOGENOM" id="CLU_157874_0_0_6"/>
<dbReference type="Proteomes" id="UP000008205">
    <property type="component" value="Chromosome"/>
</dbReference>
<dbReference type="GO" id="GO:0005829">
    <property type="term" value="C:cytosol"/>
    <property type="evidence" value="ECO:0007669"/>
    <property type="project" value="TreeGrafter"/>
</dbReference>
<dbReference type="GO" id="GO:0047975">
    <property type="term" value="F:guanosine phosphorylase activity"/>
    <property type="evidence" value="ECO:0007669"/>
    <property type="project" value="UniProtKB-EC"/>
</dbReference>
<dbReference type="GO" id="GO:0004731">
    <property type="term" value="F:purine-nucleoside phosphorylase activity"/>
    <property type="evidence" value="ECO:0007669"/>
    <property type="project" value="UniProtKB-UniRule"/>
</dbReference>
<dbReference type="GO" id="GO:0009032">
    <property type="term" value="F:thymidine phosphorylase activity"/>
    <property type="evidence" value="ECO:0007669"/>
    <property type="project" value="UniProtKB-EC"/>
</dbReference>
<dbReference type="GO" id="GO:0004850">
    <property type="term" value="F:uridine phosphorylase activity"/>
    <property type="evidence" value="ECO:0007669"/>
    <property type="project" value="UniProtKB-EC"/>
</dbReference>
<dbReference type="CDD" id="cd20296">
    <property type="entry name" value="cupin_PpnP-like"/>
    <property type="match status" value="1"/>
</dbReference>
<dbReference type="FunFam" id="2.60.120.10:FF:000016">
    <property type="entry name" value="Pyrimidine/purine nucleoside phosphorylase"/>
    <property type="match status" value="1"/>
</dbReference>
<dbReference type="Gene3D" id="2.60.120.10">
    <property type="entry name" value="Jelly Rolls"/>
    <property type="match status" value="1"/>
</dbReference>
<dbReference type="HAMAP" id="MF_01537">
    <property type="entry name" value="Nucleos_phosphorylase_PpnP"/>
    <property type="match status" value="1"/>
</dbReference>
<dbReference type="InterPro" id="IPR009664">
    <property type="entry name" value="Ppnp"/>
</dbReference>
<dbReference type="InterPro" id="IPR014710">
    <property type="entry name" value="RmlC-like_jellyroll"/>
</dbReference>
<dbReference type="InterPro" id="IPR011051">
    <property type="entry name" value="RmlC_Cupin_sf"/>
</dbReference>
<dbReference type="NCBIfam" id="NF007875">
    <property type="entry name" value="PRK10579.1"/>
    <property type="match status" value="1"/>
</dbReference>
<dbReference type="PANTHER" id="PTHR36540">
    <property type="entry name" value="PYRIMIDINE/PURINE NUCLEOSIDE PHOSPHORYLASE"/>
    <property type="match status" value="1"/>
</dbReference>
<dbReference type="PANTHER" id="PTHR36540:SF1">
    <property type="entry name" value="PYRIMIDINE_PURINE NUCLEOSIDE PHOSPHORYLASE"/>
    <property type="match status" value="1"/>
</dbReference>
<dbReference type="Pfam" id="PF06865">
    <property type="entry name" value="Ppnp"/>
    <property type="match status" value="1"/>
</dbReference>
<dbReference type="SUPFAM" id="SSF51182">
    <property type="entry name" value="RmlC-like cupins"/>
    <property type="match status" value="1"/>
</dbReference>